<protein>
    <recommendedName>
        <fullName evidence="1">GTPase Obg</fullName>
        <ecNumber evidence="1">3.6.5.-</ecNumber>
    </recommendedName>
    <alternativeName>
        <fullName evidence="1">GTP-binding protein Obg</fullName>
    </alternativeName>
</protein>
<sequence length="335" mass="35661">MQFIDRSEIEVEGGRGGDGMVAYRREKYVPAGGPAGGDGGHGGAVVLEATANLQTLLDFKYRHRFEADDGTKGGPKNLTGAKGKDLVIAVPCGTVVQDAVTGETIGDLTEPGQRLVVAVGGRGGHGNTHFASNQNRAPDYATEGRLGQQRKLLLELKLLAEVGIIGLPNAGKSTLISVLSAARPRIADYPFTTLVPNLGVVRKVTGDGVVFADIPGLIEGAHQGVGLGHEFLRHIERTRVLVQLIALDSADPLADYRTVIDELGRYGRELLHKSRIVALNKADVCLPEEAEHWRRILSTETGEPVLVISAAARSNLDALLARVWQVLEAPQGVTT</sequence>
<keyword id="KW-0963">Cytoplasm</keyword>
<keyword id="KW-0342">GTP-binding</keyword>
<keyword id="KW-0378">Hydrolase</keyword>
<keyword id="KW-0460">Magnesium</keyword>
<keyword id="KW-0479">Metal-binding</keyword>
<keyword id="KW-0547">Nucleotide-binding</keyword>
<keyword id="KW-1185">Reference proteome</keyword>
<accession>Q7ND61</accession>
<comment type="function">
    <text evidence="1">An essential GTPase which binds GTP, GDP and possibly (p)ppGpp with moderate affinity, with high nucleotide exchange rates and a fairly low GTP hydrolysis rate. Plays a role in control of the cell cycle, stress response, ribosome biogenesis and in those bacteria that undergo differentiation, in morphogenesis control.</text>
</comment>
<comment type="cofactor">
    <cofactor evidence="1">
        <name>Mg(2+)</name>
        <dbReference type="ChEBI" id="CHEBI:18420"/>
    </cofactor>
</comment>
<comment type="subunit">
    <text evidence="1">Monomer.</text>
</comment>
<comment type="subcellular location">
    <subcellularLocation>
        <location evidence="1">Cytoplasm</location>
    </subcellularLocation>
</comment>
<comment type="similarity">
    <text evidence="1">Belongs to the TRAFAC class OBG-HflX-like GTPase superfamily. OBG GTPase family.</text>
</comment>
<proteinExistence type="inferred from homology"/>
<evidence type="ECO:0000255" key="1">
    <source>
        <dbReference type="HAMAP-Rule" id="MF_01454"/>
    </source>
</evidence>
<evidence type="ECO:0000255" key="2">
    <source>
        <dbReference type="PROSITE-ProRule" id="PRU01231"/>
    </source>
</evidence>
<reference key="1">
    <citation type="journal article" date="2003" name="DNA Res.">
        <title>Complete genome structure of Gloeobacter violaceus PCC 7421, a cyanobacterium that lacks thylakoids.</title>
        <authorList>
            <person name="Nakamura Y."/>
            <person name="Kaneko T."/>
            <person name="Sato S."/>
            <person name="Mimuro M."/>
            <person name="Miyashita H."/>
            <person name="Tsuchiya T."/>
            <person name="Sasamoto S."/>
            <person name="Watanabe A."/>
            <person name="Kawashima K."/>
            <person name="Kishida Y."/>
            <person name="Kiyokawa C."/>
            <person name="Kohara M."/>
            <person name="Matsumoto M."/>
            <person name="Matsuno A."/>
            <person name="Nakazaki N."/>
            <person name="Shimpo S."/>
            <person name="Takeuchi C."/>
            <person name="Yamada M."/>
            <person name="Tabata S."/>
        </authorList>
    </citation>
    <scope>NUCLEOTIDE SEQUENCE [LARGE SCALE GENOMIC DNA]</scope>
    <source>
        <strain>ATCC 29082 / PCC 7421</strain>
    </source>
</reference>
<dbReference type="EC" id="3.6.5.-" evidence="1"/>
<dbReference type="EMBL" id="BA000045">
    <property type="protein sequence ID" value="BAC92316.1"/>
    <property type="molecule type" value="Genomic_DNA"/>
</dbReference>
<dbReference type="RefSeq" id="NP_927321.1">
    <property type="nucleotide sequence ID" value="NC_005125.1"/>
</dbReference>
<dbReference type="RefSeq" id="WP_011144358.1">
    <property type="nucleotide sequence ID" value="NC_005125.1"/>
</dbReference>
<dbReference type="SMR" id="Q7ND61"/>
<dbReference type="FunCoup" id="Q7ND61">
    <property type="interactions" value="245"/>
</dbReference>
<dbReference type="STRING" id="251221.gene:10761894"/>
<dbReference type="EnsemblBacteria" id="BAC92316">
    <property type="protein sequence ID" value="BAC92316"/>
    <property type="gene ID" value="BAC92316"/>
</dbReference>
<dbReference type="KEGG" id="gvi:glr4375"/>
<dbReference type="PATRIC" id="fig|251221.4.peg.4404"/>
<dbReference type="eggNOG" id="COG0536">
    <property type="taxonomic scope" value="Bacteria"/>
</dbReference>
<dbReference type="HOGENOM" id="CLU_011747_2_3_3"/>
<dbReference type="InParanoid" id="Q7ND61"/>
<dbReference type="OrthoDB" id="9807318at2"/>
<dbReference type="PhylomeDB" id="Q7ND61"/>
<dbReference type="Proteomes" id="UP000000557">
    <property type="component" value="Chromosome"/>
</dbReference>
<dbReference type="GO" id="GO:0005737">
    <property type="term" value="C:cytoplasm"/>
    <property type="evidence" value="ECO:0007669"/>
    <property type="project" value="UniProtKB-SubCell"/>
</dbReference>
<dbReference type="GO" id="GO:0005525">
    <property type="term" value="F:GTP binding"/>
    <property type="evidence" value="ECO:0000318"/>
    <property type="project" value="GO_Central"/>
</dbReference>
<dbReference type="GO" id="GO:0003924">
    <property type="term" value="F:GTPase activity"/>
    <property type="evidence" value="ECO:0000318"/>
    <property type="project" value="GO_Central"/>
</dbReference>
<dbReference type="GO" id="GO:0000287">
    <property type="term" value="F:magnesium ion binding"/>
    <property type="evidence" value="ECO:0007669"/>
    <property type="project" value="InterPro"/>
</dbReference>
<dbReference type="GO" id="GO:0042254">
    <property type="term" value="P:ribosome biogenesis"/>
    <property type="evidence" value="ECO:0007669"/>
    <property type="project" value="UniProtKB-UniRule"/>
</dbReference>
<dbReference type="CDD" id="cd01898">
    <property type="entry name" value="Obg"/>
    <property type="match status" value="1"/>
</dbReference>
<dbReference type="FunFam" id="2.70.210.12:FF:000001">
    <property type="entry name" value="GTPase Obg"/>
    <property type="match status" value="1"/>
</dbReference>
<dbReference type="Gene3D" id="2.70.210.12">
    <property type="entry name" value="GTP1/OBG domain"/>
    <property type="match status" value="1"/>
</dbReference>
<dbReference type="Gene3D" id="3.40.50.300">
    <property type="entry name" value="P-loop containing nucleotide triphosphate hydrolases"/>
    <property type="match status" value="1"/>
</dbReference>
<dbReference type="HAMAP" id="MF_01454">
    <property type="entry name" value="GTPase_Obg"/>
    <property type="match status" value="1"/>
</dbReference>
<dbReference type="InterPro" id="IPR031167">
    <property type="entry name" value="G_OBG"/>
</dbReference>
<dbReference type="InterPro" id="IPR006073">
    <property type="entry name" value="GTP-bd"/>
</dbReference>
<dbReference type="InterPro" id="IPR014100">
    <property type="entry name" value="GTP-bd_Obg/CgtA"/>
</dbReference>
<dbReference type="InterPro" id="IPR006074">
    <property type="entry name" value="GTP1-OBG_CS"/>
</dbReference>
<dbReference type="InterPro" id="IPR006169">
    <property type="entry name" value="GTP1_OBG_dom"/>
</dbReference>
<dbReference type="InterPro" id="IPR036726">
    <property type="entry name" value="GTP1_OBG_dom_sf"/>
</dbReference>
<dbReference type="InterPro" id="IPR045086">
    <property type="entry name" value="OBG_GTPase"/>
</dbReference>
<dbReference type="InterPro" id="IPR027417">
    <property type="entry name" value="P-loop_NTPase"/>
</dbReference>
<dbReference type="NCBIfam" id="TIGR02729">
    <property type="entry name" value="Obg_CgtA"/>
    <property type="match status" value="1"/>
</dbReference>
<dbReference type="NCBIfam" id="NF008955">
    <property type="entry name" value="PRK12297.1"/>
    <property type="match status" value="1"/>
</dbReference>
<dbReference type="NCBIfam" id="NF008956">
    <property type="entry name" value="PRK12299.1"/>
    <property type="match status" value="1"/>
</dbReference>
<dbReference type="PANTHER" id="PTHR11702">
    <property type="entry name" value="DEVELOPMENTALLY REGULATED GTP-BINDING PROTEIN-RELATED"/>
    <property type="match status" value="1"/>
</dbReference>
<dbReference type="PANTHER" id="PTHR11702:SF31">
    <property type="entry name" value="MITOCHONDRIAL RIBOSOME-ASSOCIATED GTPASE 2"/>
    <property type="match status" value="1"/>
</dbReference>
<dbReference type="Pfam" id="PF01018">
    <property type="entry name" value="GTP1_OBG"/>
    <property type="match status" value="1"/>
</dbReference>
<dbReference type="Pfam" id="PF01926">
    <property type="entry name" value="MMR_HSR1"/>
    <property type="match status" value="1"/>
</dbReference>
<dbReference type="PIRSF" id="PIRSF002401">
    <property type="entry name" value="GTP_bd_Obg/CgtA"/>
    <property type="match status" value="1"/>
</dbReference>
<dbReference type="PRINTS" id="PR00326">
    <property type="entry name" value="GTP1OBG"/>
</dbReference>
<dbReference type="SUPFAM" id="SSF82051">
    <property type="entry name" value="Obg GTP-binding protein N-terminal domain"/>
    <property type="match status" value="1"/>
</dbReference>
<dbReference type="SUPFAM" id="SSF52540">
    <property type="entry name" value="P-loop containing nucleoside triphosphate hydrolases"/>
    <property type="match status" value="1"/>
</dbReference>
<dbReference type="PROSITE" id="PS51710">
    <property type="entry name" value="G_OBG"/>
    <property type="match status" value="1"/>
</dbReference>
<dbReference type="PROSITE" id="PS00905">
    <property type="entry name" value="GTP1_OBG"/>
    <property type="match status" value="1"/>
</dbReference>
<dbReference type="PROSITE" id="PS51883">
    <property type="entry name" value="OBG"/>
    <property type="match status" value="1"/>
</dbReference>
<organism>
    <name type="scientific">Gloeobacter violaceus (strain ATCC 29082 / PCC 7421)</name>
    <dbReference type="NCBI Taxonomy" id="251221"/>
    <lineage>
        <taxon>Bacteria</taxon>
        <taxon>Bacillati</taxon>
        <taxon>Cyanobacteriota</taxon>
        <taxon>Cyanophyceae</taxon>
        <taxon>Gloeobacterales</taxon>
        <taxon>Gloeobacteraceae</taxon>
        <taxon>Gloeobacter</taxon>
    </lineage>
</organism>
<name>OBG_GLOVI</name>
<feature type="chain" id="PRO_0000385956" description="GTPase Obg">
    <location>
        <begin position="1"/>
        <end position="335"/>
    </location>
</feature>
<feature type="domain" description="Obg" evidence="2">
    <location>
        <begin position="1"/>
        <end position="159"/>
    </location>
</feature>
<feature type="domain" description="OBG-type G" evidence="1">
    <location>
        <begin position="160"/>
        <end position="328"/>
    </location>
</feature>
<feature type="binding site" evidence="1">
    <location>
        <begin position="166"/>
        <end position="173"/>
    </location>
    <ligand>
        <name>GTP</name>
        <dbReference type="ChEBI" id="CHEBI:37565"/>
    </ligand>
</feature>
<feature type="binding site" evidence="1">
    <location>
        <position position="173"/>
    </location>
    <ligand>
        <name>Mg(2+)</name>
        <dbReference type="ChEBI" id="CHEBI:18420"/>
    </ligand>
</feature>
<feature type="binding site" evidence="1">
    <location>
        <begin position="191"/>
        <end position="195"/>
    </location>
    <ligand>
        <name>GTP</name>
        <dbReference type="ChEBI" id="CHEBI:37565"/>
    </ligand>
</feature>
<feature type="binding site" evidence="1">
    <location>
        <position position="193"/>
    </location>
    <ligand>
        <name>Mg(2+)</name>
        <dbReference type="ChEBI" id="CHEBI:18420"/>
    </ligand>
</feature>
<feature type="binding site" evidence="1">
    <location>
        <begin position="213"/>
        <end position="216"/>
    </location>
    <ligand>
        <name>GTP</name>
        <dbReference type="ChEBI" id="CHEBI:37565"/>
    </ligand>
</feature>
<feature type="binding site" evidence="1">
    <location>
        <begin position="280"/>
        <end position="283"/>
    </location>
    <ligand>
        <name>GTP</name>
        <dbReference type="ChEBI" id="CHEBI:37565"/>
    </ligand>
</feature>
<feature type="binding site" evidence="1">
    <location>
        <begin position="309"/>
        <end position="311"/>
    </location>
    <ligand>
        <name>GTP</name>
        <dbReference type="ChEBI" id="CHEBI:37565"/>
    </ligand>
</feature>
<gene>
    <name evidence="1" type="primary">obg</name>
    <name type="ordered locus">glr4375</name>
</gene>